<keyword id="KW-0963">Cytoplasm</keyword>
<keyword id="KW-0903">Direct protein sequencing</keyword>
<keyword id="KW-0342">GTP-binding</keyword>
<keyword id="KW-0343">GTPase activation</keyword>
<keyword id="KW-0396">Initiation factor</keyword>
<keyword id="KW-1017">Isopeptide bond</keyword>
<keyword id="KW-0547">Nucleotide-binding</keyword>
<keyword id="KW-0597">Phosphoprotein</keyword>
<keyword id="KW-0648">Protein biosynthesis</keyword>
<keyword id="KW-1185">Reference proteome</keyword>
<keyword id="KW-0832">Ubl conjugation</keyword>
<comment type="function">
    <text evidence="1">Component of the 43S pre-initiation complex (43S PIC), which binds to the mRNA cap-proximal region, scans mRNA 5'-untranslated region, and locates the initiation codon. In this complex, acts as a GTPase-activating protein, by promoting GTP hydrolysis by eIF2G (EIF2S3). During scanning, interacts with both EIF1 (via its C-terminal domain (CTD)) and EIF1A (via its NTD). This interaction with EIF1A contributes to the maintenance of EIF1 within the open 43S PIC. When start codon is recognized, EIF5, via its NTD, induces eIF2G (EIF2S3) to hydrolyze the GTP. Start codon recognition also induces a conformational change of the PIC to a closed state. This change increases the affinity of EIF5-CTD for EIF2-beta (EIF2S2), which allows the release, by an indirect mechanism, of EIF1 from the PIC. Finally, EIF5 stabilizes the PIC in its closed conformation.</text>
</comment>
<comment type="subunit">
    <text evidence="1">Component of the 43S pre-initiation complex (43S PIC), which is composed of the 40S ribosomal subunit, EIF1, eIF1A (EIF1AX), eIF3 complex, EIF5 and eIF2-GTP-initiator tRNA complex (eIF2 ternary complex). Interacts with eIF1A (EIF1AX) during scanning. Interacts through its C-terminal domain (CTD) with EIF1 or with eIF2-beta (EIF2S2) (mutually exclusive) through a common binding site. Interacts through its C-terminal domain (CTD) with the CTD of EIF5B. Interacts with FMR1 isoform 6; this interaction occurs in a RNA-dependent manner.</text>
</comment>
<comment type="subcellular location">
    <subcellularLocation>
        <location evidence="6">Cytoplasm</location>
    </subcellularLocation>
</comment>
<comment type="similarity">
    <text evidence="6">Belongs to the eIF-2-beta/eIF-5 family.</text>
</comment>
<gene>
    <name type="primary">Eif5</name>
</gene>
<organism>
    <name type="scientific">Rattus norvegicus</name>
    <name type="common">Rat</name>
    <dbReference type="NCBI Taxonomy" id="10116"/>
    <lineage>
        <taxon>Eukaryota</taxon>
        <taxon>Metazoa</taxon>
        <taxon>Chordata</taxon>
        <taxon>Craniata</taxon>
        <taxon>Vertebrata</taxon>
        <taxon>Euteleostomi</taxon>
        <taxon>Mammalia</taxon>
        <taxon>Eutheria</taxon>
        <taxon>Euarchontoglires</taxon>
        <taxon>Glires</taxon>
        <taxon>Rodentia</taxon>
        <taxon>Myomorpha</taxon>
        <taxon>Muroidea</taxon>
        <taxon>Muridae</taxon>
        <taxon>Murinae</taxon>
        <taxon>Rattus</taxon>
    </lineage>
</organism>
<proteinExistence type="evidence at protein level"/>
<dbReference type="EMBL" id="L11651">
    <property type="protein sequence ID" value="AAA41112.1"/>
    <property type="molecule type" value="mRNA"/>
</dbReference>
<dbReference type="EMBL" id="BC062398">
    <property type="protein sequence ID" value="AAH62398.1"/>
    <property type="molecule type" value="mRNA"/>
</dbReference>
<dbReference type="PIR" id="A47305">
    <property type="entry name" value="A47305"/>
</dbReference>
<dbReference type="RefSeq" id="NP_001316808.1">
    <property type="nucleotide sequence ID" value="NM_001329879.2"/>
</dbReference>
<dbReference type="RefSeq" id="NP_064460.1">
    <property type="nucleotide sequence ID" value="NM_020075.1"/>
</dbReference>
<dbReference type="RefSeq" id="XP_006240671.1">
    <property type="nucleotide sequence ID" value="XM_006240609.5"/>
</dbReference>
<dbReference type="RefSeq" id="XP_017458786.1">
    <property type="nucleotide sequence ID" value="XM_017603297.1"/>
</dbReference>
<dbReference type="RefSeq" id="XP_038967530.1">
    <property type="nucleotide sequence ID" value="XM_039111602.2"/>
</dbReference>
<dbReference type="BMRB" id="Q07205"/>
<dbReference type="SMR" id="Q07205"/>
<dbReference type="BioGRID" id="248584">
    <property type="interactions" value="2"/>
</dbReference>
<dbReference type="FunCoup" id="Q07205">
    <property type="interactions" value="3941"/>
</dbReference>
<dbReference type="IntAct" id="Q07205">
    <property type="interactions" value="2"/>
</dbReference>
<dbReference type="STRING" id="10116.ENSRNOP00000013695"/>
<dbReference type="iPTMnet" id="Q07205"/>
<dbReference type="PhosphoSitePlus" id="Q07205"/>
<dbReference type="SwissPalm" id="Q07205"/>
<dbReference type="jPOST" id="Q07205"/>
<dbReference type="PaxDb" id="10116-ENSRNOP00000013695"/>
<dbReference type="Ensembl" id="ENSRNOT00000013695.8">
    <property type="protein sequence ID" value="ENSRNOP00000013695.6"/>
    <property type="gene ID" value="ENSRNOG00000010218.8"/>
</dbReference>
<dbReference type="GeneID" id="108348073"/>
<dbReference type="KEGG" id="rno:108348073"/>
<dbReference type="UCSC" id="RGD:619861">
    <property type="organism name" value="rat"/>
</dbReference>
<dbReference type="AGR" id="RGD:619861"/>
<dbReference type="CTD" id="1983"/>
<dbReference type="RGD" id="619861">
    <property type="gene designation" value="Eif5"/>
</dbReference>
<dbReference type="eggNOG" id="KOG2767">
    <property type="taxonomic scope" value="Eukaryota"/>
</dbReference>
<dbReference type="GeneTree" id="ENSGT00390000016478"/>
<dbReference type="HOGENOM" id="CLU_026663_1_0_1"/>
<dbReference type="InParanoid" id="Q07205"/>
<dbReference type="OMA" id="YRYKMEK"/>
<dbReference type="OrthoDB" id="10250831at2759"/>
<dbReference type="PhylomeDB" id="Q07205"/>
<dbReference type="Reactome" id="R-RNO-72702">
    <property type="pathway name" value="Ribosomal scanning and start codon recognition"/>
</dbReference>
<dbReference type="PRO" id="PR:Q07205"/>
<dbReference type="Proteomes" id="UP000002494">
    <property type="component" value="Chromosome 6"/>
</dbReference>
<dbReference type="Bgee" id="ENSRNOG00000010218">
    <property type="expression patterns" value="Expressed in ileum and 20 other cell types or tissues"/>
</dbReference>
<dbReference type="GO" id="GO:0005737">
    <property type="term" value="C:cytoplasm"/>
    <property type="evidence" value="ECO:0000266"/>
    <property type="project" value="RGD"/>
</dbReference>
<dbReference type="GO" id="GO:0005829">
    <property type="term" value="C:cytosol"/>
    <property type="evidence" value="ECO:0000318"/>
    <property type="project" value="GO_Central"/>
</dbReference>
<dbReference type="GO" id="GO:0045202">
    <property type="term" value="C:synapse"/>
    <property type="evidence" value="ECO:0000266"/>
    <property type="project" value="RGD"/>
</dbReference>
<dbReference type="GO" id="GO:0071074">
    <property type="term" value="F:eukaryotic initiation factor eIF2 binding"/>
    <property type="evidence" value="ECO:0000314"/>
    <property type="project" value="RGD"/>
</dbReference>
<dbReference type="GO" id="GO:0005092">
    <property type="term" value="F:GDP-dissociation inhibitor activity"/>
    <property type="evidence" value="ECO:0000318"/>
    <property type="project" value="GO_Central"/>
</dbReference>
<dbReference type="GO" id="GO:0005525">
    <property type="term" value="F:GTP binding"/>
    <property type="evidence" value="ECO:0007669"/>
    <property type="project" value="UniProtKB-KW"/>
</dbReference>
<dbReference type="GO" id="GO:0005096">
    <property type="term" value="F:GTPase activator activity"/>
    <property type="evidence" value="ECO:0007669"/>
    <property type="project" value="UniProtKB-KW"/>
</dbReference>
<dbReference type="GO" id="GO:0003743">
    <property type="term" value="F:translation initiation factor activity"/>
    <property type="evidence" value="ECO:0000314"/>
    <property type="project" value="RGD"/>
</dbReference>
<dbReference type="GO" id="GO:0001732">
    <property type="term" value="P:formation of cytoplasmic translation initiation complex"/>
    <property type="evidence" value="ECO:0000318"/>
    <property type="project" value="GO_Central"/>
</dbReference>
<dbReference type="GO" id="GO:0001731">
    <property type="term" value="P:formation of translation preinitiation complex"/>
    <property type="evidence" value="ECO:0000314"/>
    <property type="project" value="RGD"/>
</dbReference>
<dbReference type="GO" id="GO:0006446">
    <property type="term" value="P:regulation of translational initiation"/>
    <property type="evidence" value="ECO:0000266"/>
    <property type="project" value="RGD"/>
</dbReference>
<dbReference type="GO" id="GO:0042255">
    <property type="term" value="P:ribosome assembly"/>
    <property type="evidence" value="ECO:0000266"/>
    <property type="project" value="RGD"/>
</dbReference>
<dbReference type="CDD" id="cd11561">
    <property type="entry name" value="W2_eIF5"/>
    <property type="match status" value="1"/>
</dbReference>
<dbReference type="FunFam" id="2.20.25.350:FF:000002">
    <property type="entry name" value="Eukaryotic translation initiation factor 5"/>
    <property type="match status" value="1"/>
</dbReference>
<dbReference type="FunFam" id="3.30.30.170:FF:000002">
    <property type="entry name" value="Eukaryotic translation initiation factor 5"/>
    <property type="match status" value="1"/>
</dbReference>
<dbReference type="FunFam" id="1.25.40.180:FF:000018">
    <property type="entry name" value="eukaryotic translation initiation factor 5"/>
    <property type="match status" value="1"/>
</dbReference>
<dbReference type="Gene3D" id="1.25.40.180">
    <property type="match status" value="1"/>
</dbReference>
<dbReference type="Gene3D" id="2.20.25.350">
    <property type="match status" value="1"/>
</dbReference>
<dbReference type="Gene3D" id="3.30.30.170">
    <property type="match status" value="1"/>
</dbReference>
<dbReference type="InterPro" id="IPR016024">
    <property type="entry name" value="ARM-type_fold"/>
</dbReference>
<dbReference type="InterPro" id="IPR045196">
    <property type="entry name" value="IF2/IF5"/>
</dbReference>
<dbReference type="InterPro" id="IPR002735">
    <property type="entry name" value="Transl_init_fac_IF2/IF5_dom"/>
</dbReference>
<dbReference type="InterPro" id="IPR016189">
    <property type="entry name" value="Transl_init_fac_IF2/IF5_N"/>
</dbReference>
<dbReference type="InterPro" id="IPR016190">
    <property type="entry name" value="Transl_init_fac_IF2/IF5_Zn-bd"/>
</dbReference>
<dbReference type="InterPro" id="IPR003307">
    <property type="entry name" value="W2_domain"/>
</dbReference>
<dbReference type="PANTHER" id="PTHR23001">
    <property type="entry name" value="EUKARYOTIC TRANSLATION INITIATION FACTOR"/>
    <property type="match status" value="1"/>
</dbReference>
<dbReference type="PANTHER" id="PTHR23001:SF7">
    <property type="entry name" value="EUKARYOTIC TRANSLATION INITIATION FACTOR 5"/>
    <property type="match status" value="1"/>
</dbReference>
<dbReference type="Pfam" id="PF01873">
    <property type="entry name" value="eIF-5_eIF-2B"/>
    <property type="match status" value="1"/>
</dbReference>
<dbReference type="Pfam" id="PF02020">
    <property type="entry name" value="W2"/>
    <property type="match status" value="1"/>
</dbReference>
<dbReference type="SMART" id="SM00653">
    <property type="entry name" value="eIF2B_5"/>
    <property type="match status" value="1"/>
</dbReference>
<dbReference type="SMART" id="SM00515">
    <property type="entry name" value="eIF5C"/>
    <property type="match status" value="1"/>
</dbReference>
<dbReference type="SUPFAM" id="SSF48371">
    <property type="entry name" value="ARM repeat"/>
    <property type="match status" value="1"/>
</dbReference>
<dbReference type="SUPFAM" id="SSF100966">
    <property type="entry name" value="Translation initiation factor 2 beta, aIF2beta, N-terminal domain"/>
    <property type="match status" value="1"/>
</dbReference>
<dbReference type="SUPFAM" id="SSF75689">
    <property type="entry name" value="Zinc-binding domain of translation initiation factor 2 beta"/>
    <property type="match status" value="1"/>
</dbReference>
<dbReference type="PROSITE" id="PS51363">
    <property type="entry name" value="W2"/>
    <property type="match status" value="1"/>
</dbReference>
<name>IF5_RAT</name>
<reference key="1">
    <citation type="journal article" date="1993" name="Proc. Natl. Acad. Sci. U.S.A.">
        <title>Molecular cloning and expression of cDNA for mammalian translation initiation factor 5.</title>
        <authorList>
            <person name="Das K."/>
            <person name="Chevesich J."/>
            <person name="Maitra U."/>
        </authorList>
    </citation>
    <scope>NUCLEOTIDE SEQUENCE [MRNA]</scope>
    <scope>PROTEIN SEQUENCE OF 131-150; 215-242 AND 339-353</scope>
    <source>
        <tissue>Liver</tissue>
    </source>
</reference>
<reference key="2">
    <citation type="journal article" date="2004" name="Genome Res.">
        <title>The status, quality, and expansion of the NIH full-length cDNA project: the Mammalian Gene Collection (MGC).</title>
        <authorList>
            <consortium name="The MGC Project Team"/>
        </authorList>
    </citation>
    <scope>NUCLEOTIDE SEQUENCE [LARGE SCALE MRNA]</scope>
    <source>
        <tissue>Prostate</tissue>
    </source>
</reference>
<reference key="3">
    <citation type="journal article" date="2002" name="Nucleic Acids Res.">
        <title>Phosphorylation of mammalian translation initiation factor 5 (eIF5) in vitro and in vivo.</title>
        <authorList>
            <person name="Majumdar R."/>
            <person name="Bandyopadhyay A."/>
            <person name="Deng H."/>
            <person name="Maitra U."/>
        </authorList>
    </citation>
    <scope>PHOSPHORYLATION AT SER-387 AND SER-388</scope>
</reference>
<reference key="4">
    <citation type="journal article" date="2012" name="Nat. Commun.">
        <title>Quantitative maps of protein phosphorylation sites across 14 different rat organs and tissues.</title>
        <authorList>
            <person name="Lundby A."/>
            <person name="Secher A."/>
            <person name="Lage K."/>
            <person name="Nordsborg N.B."/>
            <person name="Dmytriyev A."/>
            <person name="Lundby C."/>
            <person name="Olsen J.V."/>
        </authorList>
    </citation>
    <scope>PHOSPHORYLATION [LARGE SCALE ANALYSIS] AT SER-10; SER-227; SER-387 AND SER-388</scope>
    <scope>IDENTIFICATION BY MASS SPECTROMETRY [LARGE SCALE ANALYSIS]</scope>
</reference>
<evidence type="ECO:0000250" key="1">
    <source>
        <dbReference type="UniProtKB" id="P55010"/>
    </source>
</evidence>
<evidence type="ECO:0000255" key="2"/>
<evidence type="ECO:0000255" key="3">
    <source>
        <dbReference type="PROSITE-ProRule" id="PRU00695"/>
    </source>
</evidence>
<evidence type="ECO:0000256" key="4">
    <source>
        <dbReference type="SAM" id="MobiDB-lite"/>
    </source>
</evidence>
<evidence type="ECO:0000269" key="5">
    <source>
    </source>
</evidence>
<evidence type="ECO:0000305" key="6"/>
<evidence type="ECO:0007744" key="7">
    <source>
    </source>
</evidence>
<accession>Q07205</accession>
<feature type="chain" id="PRO_0000212518" description="Eukaryotic translation initiation factor 5">
    <location>
        <begin position="1"/>
        <end position="429"/>
    </location>
</feature>
<feature type="domain" description="W2" evidence="3">
    <location>
        <begin position="231"/>
        <end position="390"/>
    </location>
</feature>
<feature type="region of interest" description="Disordered" evidence="4">
    <location>
        <begin position="143"/>
        <end position="216"/>
    </location>
</feature>
<feature type="compositionally biased region" description="Basic and acidic residues" evidence="4">
    <location>
        <begin position="153"/>
        <end position="170"/>
    </location>
</feature>
<feature type="compositionally biased region" description="Pro residues" evidence="4">
    <location>
        <begin position="178"/>
        <end position="187"/>
    </location>
</feature>
<feature type="compositionally biased region" description="Acidic residues" evidence="4">
    <location>
        <begin position="194"/>
        <end position="207"/>
    </location>
</feature>
<feature type="binding site" evidence="2">
    <location>
        <begin position="27"/>
        <end position="34"/>
    </location>
    <ligand>
        <name>GTP</name>
        <dbReference type="ChEBI" id="CHEBI:37565"/>
    </ligand>
</feature>
<feature type="site" description="Arginine finger" evidence="1">
    <location>
        <position position="15"/>
    </location>
</feature>
<feature type="modified residue" description="Phosphoserine" evidence="7">
    <location>
        <position position="10"/>
    </location>
</feature>
<feature type="modified residue" description="Phosphothreonine" evidence="1">
    <location>
        <position position="225"/>
    </location>
</feature>
<feature type="modified residue" description="Phosphoserine" evidence="7">
    <location>
        <position position="227"/>
    </location>
</feature>
<feature type="modified residue" description="Phosphoserine" evidence="5 7">
    <location>
        <position position="387"/>
    </location>
</feature>
<feature type="modified residue" description="Phosphoserine" evidence="5 7">
    <location>
        <position position="388"/>
    </location>
</feature>
<feature type="modified residue" description="Phosphoserine" evidence="1">
    <location>
        <position position="408"/>
    </location>
</feature>
<feature type="modified residue" description="Phosphoserine" evidence="1">
    <location>
        <position position="417"/>
    </location>
</feature>
<feature type="cross-link" description="Glycyl lysine isopeptide (Lys-Gly) (interchain with G-Cter in SUMO2)" evidence="1">
    <location>
        <position position="411"/>
    </location>
</feature>
<feature type="cross-link" description="Glycyl lysine isopeptide (Lys-Gly) (interchain with G-Cter in SUMO2)" evidence="1">
    <location>
        <position position="416"/>
    </location>
</feature>
<protein>
    <recommendedName>
        <fullName>Eukaryotic translation initiation factor 5</fullName>
        <shortName>eIF-5</shortName>
    </recommendedName>
</protein>
<sequence length="429" mass="48954">MSVNVNRSVSDQFYRYKMPRLIAKVEGKGNGIKTVIVNMVDVAKALNRPPTYPTKYFGCELGAQTQFDVKNDRYIVNGSHEANKLQDMLDGFIKKFVLCPECENPETDLHVNPKKQTIGNSCKACGYRGMLDTHHKLCTFILKNPPENSDIGTGKKEKEKKNRKGKDKENGSVSTSETPPPPPPNEISPPHAVEEEEDDDWGEDTTEEAQRRRMDEISDHAKGLTLSDDLERTVEERVNILFDFVKKKKEEGIIDSSDKDIVAEAERLDVKAMGPLVLTEVLFDEKIREQIKKYRRHFLRFCHNNKKAQRYLLHGLECVVAMHQAQLISKIPHILKEMYDADLLEEEVIISWSEKASKKYVSKELAKEIRVKAEPFIKWLKEAEEESSGGEEEDEDENIEVVYSKTASVPKVETVKSDNKDDDIDIDAI</sequence>